<gene>
    <name type="ordered locus">PMT9312_0175</name>
</gene>
<organism>
    <name type="scientific">Prochlorococcus marinus (strain MIT 9312)</name>
    <dbReference type="NCBI Taxonomy" id="74546"/>
    <lineage>
        <taxon>Bacteria</taxon>
        <taxon>Bacillati</taxon>
        <taxon>Cyanobacteriota</taxon>
        <taxon>Cyanophyceae</taxon>
        <taxon>Synechococcales</taxon>
        <taxon>Prochlorococcaceae</taxon>
        <taxon>Prochlorococcus</taxon>
    </lineage>
</organism>
<comment type="function">
    <text evidence="1">Catalyzes the hydrolysis of 1,4-dihydroxy-2-naphthoyl-CoA (DHNA-CoA) to 1,4-dihydroxy-2-naphthoate (DHNA), a reaction involved in phylloquinone (vitamin K1) biosynthesis.</text>
</comment>
<comment type="catalytic activity">
    <reaction evidence="1">
        <text>1,4-dihydroxy-2-naphthoyl-CoA + H2O = 1,4-dihydroxy-2-naphthoate + CoA + H(+)</text>
        <dbReference type="Rhea" id="RHEA:26309"/>
        <dbReference type="ChEBI" id="CHEBI:11173"/>
        <dbReference type="ChEBI" id="CHEBI:15377"/>
        <dbReference type="ChEBI" id="CHEBI:15378"/>
        <dbReference type="ChEBI" id="CHEBI:57287"/>
        <dbReference type="ChEBI" id="CHEBI:58897"/>
        <dbReference type="EC" id="3.1.2.28"/>
    </reaction>
</comment>
<comment type="pathway">
    <text evidence="1">Cofactor biosynthesis; phylloquinone biosynthesis.</text>
</comment>
<comment type="pathway">
    <text evidence="1">Quinol/quinone metabolism; 1,4-dihydroxy-2-naphthoate biosynthesis; 1,4-dihydroxy-2-naphthoate from chorismate: step 7/7.</text>
</comment>
<comment type="similarity">
    <text evidence="1">Belongs to the 4-hydroxybenzoyl-CoA thioesterase family. DHNA-CoA hydrolase subfamily.</text>
</comment>
<name>DNCH_PROM9</name>
<feature type="chain" id="PRO_0000377021" description="1,4-dihydroxy-2-naphthoyl-CoA hydrolase">
    <location>
        <begin position="1"/>
        <end position="150"/>
    </location>
</feature>
<feature type="active site" evidence="1">
    <location>
        <position position="19"/>
    </location>
</feature>
<reference key="1">
    <citation type="journal article" date="2006" name="Science">
        <title>Genomic islands and the ecology and evolution of Prochlorococcus.</title>
        <authorList>
            <person name="Coleman M.L."/>
            <person name="Sullivan M.B."/>
            <person name="Martiny A.C."/>
            <person name="Steglich C."/>
            <person name="Barry K."/>
            <person name="Delong E.F."/>
            <person name="Chisholm S.W."/>
        </authorList>
    </citation>
    <scope>NUCLEOTIDE SEQUENCE [LARGE SCALE GENOMIC DNA]</scope>
    <source>
        <strain>MIT 9312</strain>
    </source>
</reference>
<accession>Q31D08</accession>
<proteinExistence type="inferred from homology"/>
<sequence length="150" mass="17453">MKPSDWLILQKKVRFGDCDSAGVIHFHNLLKWSHEAWEESIEIYGIPYQDIFPDFSIRKSQIIFPIVNCEANYLAPIKIGDLLKVKIYPHKINPHLFRVNSFFMKNGNKVAEGKIIHCSLDVDSRNKIELPDQLERWIEASNISTNLKEC</sequence>
<evidence type="ECO:0000255" key="1">
    <source>
        <dbReference type="HAMAP-Rule" id="MF_02101"/>
    </source>
</evidence>
<keyword id="KW-0378">Hydrolase</keyword>
<dbReference type="EC" id="3.1.2.28" evidence="1"/>
<dbReference type="EMBL" id="CP000111">
    <property type="protein sequence ID" value="ABB49237.1"/>
    <property type="molecule type" value="Genomic_DNA"/>
</dbReference>
<dbReference type="RefSeq" id="WP_011375741.1">
    <property type="nucleotide sequence ID" value="NC_007577.1"/>
</dbReference>
<dbReference type="SMR" id="Q31D08"/>
<dbReference type="STRING" id="74546.PMT9312_0175"/>
<dbReference type="KEGG" id="pmi:PMT9312_0175"/>
<dbReference type="eggNOG" id="COG0824">
    <property type="taxonomic scope" value="Bacteria"/>
</dbReference>
<dbReference type="HOGENOM" id="CLU_101141_5_3_3"/>
<dbReference type="OrthoDB" id="9800856at2"/>
<dbReference type="UniPathway" id="UPA00995"/>
<dbReference type="UniPathway" id="UPA01057">
    <property type="reaction ID" value="UER01033"/>
</dbReference>
<dbReference type="Proteomes" id="UP000002715">
    <property type="component" value="Chromosome"/>
</dbReference>
<dbReference type="GO" id="GO:0061522">
    <property type="term" value="F:1,4-dihydroxy-2-naphthoyl-CoA thioesterase activity"/>
    <property type="evidence" value="ECO:0007669"/>
    <property type="project" value="UniProtKB-EC"/>
</dbReference>
<dbReference type="GO" id="GO:0047617">
    <property type="term" value="F:fatty acyl-CoA hydrolase activity"/>
    <property type="evidence" value="ECO:0007669"/>
    <property type="project" value="TreeGrafter"/>
</dbReference>
<dbReference type="GO" id="GO:0042372">
    <property type="term" value="P:phylloquinone biosynthetic process"/>
    <property type="evidence" value="ECO:0007669"/>
    <property type="project" value="UniProtKB-UniRule"/>
</dbReference>
<dbReference type="CDD" id="cd00586">
    <property type="entry name" value="4HBT"/>
    <property type="match status" value="1"/>
</dbReference>
<dbReference type="Gene3D" id="3.10.129.10">
    <property type="entry name" value="Hotdog Thioesterase"/>
    <property type="match status" value="1"/>
</dbReference>
<dbReference type="HAMAP" id="MF_02101">
    <property type="entry name" value="DHNA_CoA_hydrolase"/>
    <property type="match status" value="1"/>
</dbReference>
<dbReference type="InterPro" id="IPR050563">
    <property type="entry name" value="4-hydroxybenzoyl-CoA_TE"/>
</dbReference>
<dbReference type="InterPro" id="IPR022829">
    <property type="entry name" value="DHNA_CoA_hydrolase"/>
</dbReference>
<dbReference type="InterPro" id="IPR029069">
    <property type="entry name" value="HotDog_dom_sf"/>
</dbReference>
<dbReference type="PANTHER" id="PTHR31793">
    <property type="entry name" value="4-HYDROXYBENZOYL-COA THIOESTERASE FAMILY MEMBER"/>
    <property type="match status" value="1"/>
</dbReference>
<dbReference type="PANTHER" id="PTHR31793:SF27">
    <property type="entry name" value="NOVEL THIOESTERASE SUPERFAMILY DOMAIN AND SAPOSIN A-TYPE DOMAIN CONTAINING PROTEIN (0610012H03RIK)"/>
    <property type="match status" value="1"/>
</dbReference>
<dbReference type="Pfam" id="PF13279">
    <property type="entry name" value="4HBT_2"/>
    <property type="match status" value="1"/>
</dbReference>
<dbReference type="SUPFAM" id="SSF54637">
    <property type="entry name" value="Thioesterase/thiol ester dehydrase-isomerase"/>
    <property type="match status" value="1"/>
</dbReference>
<protein>
    <recommendedName>
        <fullName evidence="1">1,4-dihydroxy-2-naphthoyl-CoA hydrolase</fullName>
        <shortName evidence="1">DHNA-CoA hydrolase</shortName>
        <ecNumber evidence="1">3.1.2.28</ecNumber>
    </recommendedName>
    <alternativeName>
        <fullName evidence="1">DHNA-CoA thioesterase</fullName>
    </alternativeName>
</protein>